<organism>
    <name type="scientific">Aspergillus terreus (strain NIH 2624 / FGSC A1156)</name>
    <dbReference type="NCBI Taxonomy" id="341663"/>
    <lineage>
        <taxon>Eukaryota</taxon>
        <taxon>Fungi</taxon>
        <taxon>Dikarya</taxon>
        <taxon>Ascomycota</taxon>
        <taxon>Pezizomycotina</taxon>
        <taxon>Eurotiomycetes</taxon>
        <taxon>Eurotiomycetidae</taxon>
        <taxon>Eurotiales</taxon>
        <taxon>Aspergillaceae</taxon>
        <taxon>Aspergillus</taxon>
        <taxon>Aspergillus subgen. Circumdati</taxon>
    </lineage>
</organism>
<dbReference type="EC" id="3.4.22.-"/>
<dbReference type="EMBL" id="CH476597">
    <property type="protein sequence ID" value="EAU36225.1"/>
    <property type="status" value="ALT_INIT"/>
    <property type="molecule type" value="Genomic_DNA"/>
</dbReference>
<dbReference type="RefSeq" id="XP_001212129.1">
    <property type="nucleotide sequence ID" value="XM_001212129.1"/>
</dbReference>
<dbReference type="SMR" id="Q0CTN3"/>
<dbReference type="STRING" id="341663.Q0CTN3"/>
<dbReference type="EnsemblFungi" id="EAU36225">
    <property type="protein sequence ID" value="EAU36225"/>
    <property type="gene ID" value="ATEG_02951"/>
</dbReference>
<dbReference type="GeneID" id="4317427"/>
<dbReference type="eggNOG" id="KOG1546">
    <property type="taxonomic scope" value="Eukaryota"/>
</dbReference>
<dbReference type="OrthoDB" id="3223806at2759"/>
<dbReference type="Proteomes" id="UP000007963">
    <property type="component" value="Unassembled WGS sequence"/>
</dbReference>
<dbReference type="GO" id="GO:0005737">
    <property type="term" value="C:cytoplasm"/>
    <property type="evidence" value="ECO:0007669"/>
    <property type="project" value="TreeGrafter"/>
</dbReference>
<dbReference type="GO" id="GO:0004197">
    <property type="term" value="F:cysteine-type endopeptidase activity"/>
    <property type="evidence" value="ECO:0007669"/>
    <property type="project" value="InterPro"/>
</dbReference>
<dbReference type="GO" id="GO:0006915">
    <property type="term" value="P:apoptotic process"/>
    <property type="evidence" value="ECO:0007669"/>
    <property type="project" value="UniProtKB-KW"/>
</dbReference>
<dbReference type="GO" id="GO:0006508">
    <property type="term" value="P:proteolysis"/>
    <property type="evidence" value="ECO:0007669"/>
    <property type="project" value="UniProtKB-KW"/>
</dbReference>
<dbReference type="Gene3D" id="3.40.50.12660">
    <property type="match status" value="1"/>
</dbReference>
<dbReference type="InterPro" id="IPR029030">
    <property type="entry name" value="Caspase-like_dom_sf"/>
</dbReference>
<dbReference type="InterPro" id="IPR050452">
    <property type="entry name" value="Metacaspase"/>
</dbReference>
<dbReference type="InterPro" id="IPR011600">
    <property type="entry name" value="Pept_C14_caspase"/>
</dbReference>
<dbReference type="PANTHER" id="PTHR48104:SF30">
    <property type="entry name" value="METACASPASE-1"/>
    <property type="match status" value="1"/>
</dbReference>
<dbReference type="PANTHER" id="PTHR48104">
    <property type="entry name" value="METACASPASE-4"/>
    <property type="match status" value="1"/>
</dbReference>
<dbReference type="Pfam" id="PF00656">
    <property type="entry name" value="Peptidase_C14"/>
    <property type="match status" value="1"/>
</dbReference>
<dbReference type="SUPFAM" id="SSF52129">
    <property type="entry name" value="Caspase-like"/>
    <property type="match status" value="1"/>
</dbReference>
<feature type="propeptide" id="PRO_0000333632" evidence="2">
    <location>
        <begin position="1"/>
        <end status="unknown"/>
    </location>
</feature>
<feature type="chain" id="PRO_0000333633" description="Metacaspase-1A">
    <location>
        <begin status="unknown"/>
        <end position="403"/>
    </location>
</feature>
<feature type="region of interest" description="Disordered" evidence="3">
    <location>
        <begin position="1"/>
        <end position="93"/>
    </location>
</feature>
<feature type="compositionally biased region" description="Low complexity" evidence="3">
    <location>
        <begin position="18"/>
        <end position="31"/>
    </location>
</feature>
<feature type="compositionally biased region" description="Pro residues" evidence="3">
    <location>
        <begin position="32"/>
        <end position="55"/>
    </location>
</feature>
<feature type="active site" evidence="1">
    <location>
        <position position="194"/>
    </location>
</feature>
<feature type="active site" evidence="1">
    <location>
        <position position="250"/>
    </location>
</feature>
<evidence type="ECO:0000250" key="1"/>
<evidence type="ECO:0000255" key="2"/>
<evidence type="ECO:0000256" key="3">
    <source>
        <dbReference type="SAM" id="MobiDB-lite"/>
    </source>
</evidence>
<evidence type="ECO:0000305" key="4"/>
<keyword id="KW-0053">Apoptosis</keyword>
<keyword id="KW-0378">Hydrolase</keyword>
<keyword id="KW-0645">Protease</keyword>
<keyword id="KW-1185">Reference proteome</keyword>
<keyword id="KW-0788">Thiol protease</keyword>
<keyword id="KW-0865">Zymogen</keyword>
<reference key="1">
    <citation type="submission" date="2005-09" db="EMBL/GenBank/DDBJ databases">
        <title>Annotation of the Aspergillus terreus NIH2624 genome.</title>
        <authorList>
            <person name="Birren B.W."/>
            <person name="Lander E.S."/>
            <person name="Galagan J.E."/>
            <person name="Nusbaum C."/>
            <person name="Devon K."/>
            <person name="Henn M."/>
            <person name="Ma L.-J."/>
            <person name="Jaffe D.B."/>
            <person name="Butler J."/>
            <person name="Alvarez P."/>
            <person name="Gnerre S."/>
            <person name="Grabherr M."/>
            <person name="Kleber M."/>
            <person name="Mauceli E.W."/>
            <person name="Brockman W."/>
            <person name="Rounsley S."/>
            <person name="Young S.K."/>
            <person name="LaButti K."/>
            <person name="Pushparaj V."/>
            <person name="DeCaprio D."/>
            <person name="Crawford M."/>
            <person name="Koehrsen M."/>
            <person name="Engels R."/>
            <person name="Montgomery P."/>
            <person name="Pearson M."/>
            <person name="Howarth C."/>
            <person name="Larson L."/>
            <person name="Luoma S."/>
            <person name="White J."/>
            <person name="Alvarado L."/>
            <person name="Kodira C.D."/>
            <person name="Zeng Q."/>
            <person name="Oleary S."/>
            <person name="Yandava C."/>
            <person name="Denning D.W."/>
            <person name="Nierman W.C."/>
            <person name="Milne T."/>
            <person name="Madden K."/>
        </authorList>
    </citation>
    <scope>NUCLEOTIDE SEQUENCE [LARGE SCALE GENOMIC DNA]</scope>
    <source>
        <strain>NIH 2624 / FGSC A1156</strain>
    </source>
</reference>
<accession>Q0CTN3</accession>
<comment type="function">
    <text evidence="1">Involved in cell death (apoptosis).</text>
</comment>
<comment type="similarity">
    <text evidence="4">Belongs to the peptidase C14B family.</text>
</comment>
<comment type="sequence caution" evidence="4">
    <conflict type="erroneous initiation">
        <sequence resource="EMBL-CDS" id="EAU36225"/>
    </conflict>
</comment>
<proteinExistence type="inferred from homology"/>
<name>MCA1A_ASPTN</name>
<gene>
    <name type="primary">casA</name>
    <name type="ORF">ATEG_02951</name>
</gene>
<protein>
    <recommendedName>
        <fullName>Metacaspase-1A</fullName>
        <ecNumber>3.4.22.-</ecNumber>
    </recommendedName>
</protein>
<sequence length="403" mass="44206">MQHHHHSSYGGGGGGYPGQAYRQQQPYYGQPSPQPYAQPPPPNYQRPSGYGPPPSGGHMYQQGPPAPYQQHNSYQGGHGRPAPPPTDPVAFGHGAPQGYNFQYSRCTGKRKALLIGINYFGQKGQLRGCINDVKNMSTYLNQNFGYAREDMVLLTDDQQNPMSQPTKANILRAMHWLVKDAQPNDSLFFHYSGHGGQTPDLDGDEDDGYDEVIYPVDFRVAGHIVDDEMHRIMVNPLKPGTRLTAIFDSCHSGSALDLPYIYSTQGILKEPNLAKEAGQGLLGVVSAYARGDMGSMVSTAVGFLKKAAKGDEAYERTKQTKTSPADVIMWSGSKDSQTSSDAQIQGQATGAMSWAFISALRKNPQQSYVQLLNSIRDELATKYSQKPQLSCSHPLDVNLLYVM</sequence>